<proteinExistence type="inferred from homology"/>
<organism>
    <name type="scientific">Paraburkholderia phytofirmans (strain DSM 17436 / LMG 22146 / PsJN)</name>
    <name type="common">Burkholderia phytofirmans</name>
    <dbReference type="NCBI Taxonomy" id="398527"/>
    <lineage>
        <taxon>Bacteria</taxon>
        <taxon>Pseudomonadati</taxon>
        <taxon>Pseudomonadota</taxon>
        <taxon>Betaproteobacteria</taxon>
        <taxon>Burkholderiales</taxon>
        <taxon>Burkholderiaceae</taxon>
        <taxon>Paraburkholderia</taxon>
    </lineage>
</organism>
<keyword id="KW-0067">ATP-binding</keyword>
<keyword id="KW-0997">Cell inner membrane</keyword>
<keyword id="KW-1003">Cell membrane</keyword>
<keyword id="KW-0963">Cytoplasm</keyword>
<keyword id="KW-0472">Membrane</keyword>
<keyword id="KW-0479">Metal-binding</keyword>
<keyword id="KW-0547">Nucleotide-binding</keyword>
<keyword id="KW-0653">Protein transport</keyword>
<keyword id="KW-1278">Translocase</keyword>
<keyword id="KW-0811">Translocation</keyword>
<keyword id="KW-0813">Transport</keyword>
<keyword id="KW-0862">Zinc</keyword>
<accession>B2SYW6</accession>
<evidence type="ECO:0000255" key="1">
    <source>
        <dbReference type="HAMAP-Rule" id="MF_01382"/>
    </source>
</evidence>
<feature type="chain" id="PRO_1000144986" description="Protein translocase subunit SecA">
    <location>
        <begin position="1"/>
        <end position="936"/>
    </location>
</feature>
<feature type="binding site" evidence="1">
    <location>
        <position position="87"/>
    </location>
    <ligand>
        <name>ATP</name>
        <dbReference type="ChEBI" id="CHEBI:30616"/>
    </ligand>
</feature>
<feature type="binding site" evidence="1">
    <location>
        <begin position="105"/>
        <end position="109"/>
    </location>
    <ligand>
        <name>ATP</name>
        <dbReference type="ChEBI" id="CHEBI:30616"/>
    </ligand>
</feature>
<feature type="binding site" evidence="1">
    <location>
        <position position="515"/>
    </location>
    <ligand>
        <name>ATP</name>
        <dbReference type="ChEBI" id="CHEBI:30616"/>
    </ligand>
</feature>
<feature type="binding site" evidence="1">
    <location>
        <position position="920"/>
    </location>
    <ligand>
        <name>Zn(2+)</name>
        <dbReference type="ChEBI" id="CHEBI:29105"/>
    </ligand>
</feature>
<feature type="binding site" evidence="1">
    <location>
        <position position="922"/>
    </location>
    <ligand>
        <name>Zn(2+)</name>
        <dbReference type="ChEBI" id="CHEBI:29105"/>
    </ligand>
</feature>
<feature type="binding site" evidence="1">
    <location>
        <position position="931"/>
    </location>
    <ligand>
        <name>Zn(2+)</name>
        <dbReference type="ChEBI" id="CHEBI:29105"/>
    </ligand>
</feature>
<feature type="binding site" evidence="1">
    <location>
        <position position="932"/>
    </location>
    <ligand>
        <name>Zn(2+)</name>
        <dbReference type="ChEBI" id="CHEBI:29105"/>
    </ligand>
</feature>
<comment type="function">
    <text evidence="1">Part of the Sec protein translocase complex. Interacts with the SecYEG preprotein conducting channel. Has a central role in coupling the hydrolysis of ATP to the transfer of proteins into and across the cell membrane, serving both as a receptor for the preprotein-SecB complex and as an ATP-driven molecular motor driving the stepwise translocation of polypeptide chains across the membrane.</text>
</comment>
<comment type="catalytic activity">
    <reaction evidence="1">
        <text>ATP + H2O + cellular proteinSide 1 = ADP + phosphate + cellular proteinSide 2.</text>
        <dbReference type="EC" id="7.4.2.8"/>
    </reaction>
</comment>
<comment type="cofactor">
    <cofactor evidence="1">
        <name>Zn(2+)</name>
        <dbReference type="ChEBI" id="CHEBI:29105"/>
    </cofactor>
    <text evidence="1">May bind 1 zinc ion per subunit.</text>
</comment>
<comment type="subunit">
    <text evidence="1">Monomer and homodimer. Part of the essential Sec protein translocation apparatus which comprises SecA, SecYEG and auxiliary proteins SecDF-YajC and YidC.</text>
</comment>
<comment type="subcellular location">
    <subcellularLocation>
        <location evidence="1">Cell inner membrane</location>
        <topology evidence="1">Peripheral membrane protein</topology>
        <orientation evidence="1">Cytoplasmic side</orientation>
    </subcellularLocation>
    <subcellularLocation>
        <location evidence="1">Cytoplasm</location>
    </subcellularLocation>
    <text evidence="1">Distribution is 50-50.</text>
</comment>
<comment type="similarity">
    <text evidence="1">Belongs to the SecA family.</text>
</comment>
<gene>
    <name evidence="1" type="primary">secA</name>
    <name type="ordered locus">Bphyt_3461</name>
</gene>
<name>SECA_PARPJ</name>
<dbReference type="EC" id="7.4.2.8" evidence="1"/>
<dbReference type="EMBL" id="CP001052">
    <property type="protein sequence ID" value="ACD17851.1"/>
    <property type="molecule type" value="Genomic_DNA"/>
</dbReference>
<dbReference type="RefSeq" id="WP_012434412.1">
    <property type="nucleotide sequence ID" value="NC_010681.1"/>
</dbReference>
<dbReference type="SMR" id="B2SYW6"/>
<dbReference type="STRING" id="398527.Bphyt_3461"/>
<dbReference type="KEGG" id="bpy:Bphyt_3461"/>
<dbReference type="eggNOG" id="COG0653">
    <property type="taxonomic scope" value="Bacteria"/>
</dbReference>
<dbReference type="HOGENOM" id="CLU_005314_3_0_4"/>
<dbReference type="OrthoDB" id="9805579at2"/>
<dbReference type="Proteomes" id="UP000001739">
    <property type="component" value="Chromosome 1"/>
</dbReference>
<dbReference type="GO" id="GO:0031522">
    <property type="term" value="C:cell envelope Sec protein transport complex"/>
    <property type="evidence" value="ECO:0007669"/>
    <property type="project" value="TreeGrafter"/>
</dbReference>
<dbReference type="GO" id="GO:0005829">
    <property type="term" value="C:cytosol"/>
    <property type="evidence" value="ECO:0007669"/>
    <property type="project" value="TreeGrafter"/>
</dbReference>
<dbReference type="GO" id="GO:0005886">
    <property type="term" value="C:plasma membrane"/>
    <property type="evidence" value="ECO:0007669"/>
    <property type="project" value="UniProtKB-SubCell"/>
</dbReference>
<dbReference type="GO" id="GO:0005524">
    <property type="term" value="F:ATP binding"/>
    <property type="evidence" value="ECO:0007669"/>
    <property type="project" value="UniProtKB-UniRule"/>
</dbReference>
<dbReference type="GO" id="GO:0046872">
    <property type="term" value="F:metal ion binding"/>
    <property type="evidence" value="ECO:0007669"/>
    <property type="project" value="UniProtKB-KW"/>
</dbReference>
<dbReference type="GO" id="GO:0008564">
    <property type="term" value="F:protein-exporting ATPase activity"/>
    <property type="evidence" value="ECO:0007669"/>
    <property type="project" value="UniProtKB-EC"/>
</dbReference>
<dbReference type="GO" id="GO:0065002">
    <property type="term" value="P:intracellular protein transmembrane transport"/>
    <property type="evidence" value="ECO:0007669"/>
    <property type="project" value="UniProtKB-UniRule"/>
</dbReference>
<dbReference type="GO" id="GO:0017038">
    <property type="term" value="P:protein import"/>
    <property type="evidence" value="ECO:0007669"/>
    <property type="project" value="InterPro"/>
</dbReference>
<dbReference type="GO" id="GO:0006605">
    <property type="term" value="P:protein targeting"/>
    <property type="evidence" value="ECO:0007669"/>
    <property type="project" value="UniProtKB-UniRule"/>
</dbReference>
<dbReference type="GO" id="GO:0043952">
    <property type="term" value="P:protein transport by the Sec complex"/>
    <property type="evidence" value="ECO:0007669"/>
    <property type="project" value="TreeGrafter"/>
</dbReference>
<dbReference type="CDD" id="cd17928">
    <property type="entry name" value="DEXDc_SecA"/>
    <property type="match status" value="1"/>
</dbReference>
<dbReference type="CDD" id="cd18803">
    <property type="entry name" value="SF2_C_secA"/>
    <property type="match status" value="1"/>
</dbReference>
<dbReference type="FunFam" id="3.40.50.300:FF:000081">
    <property type="entry name" value="Preprotein translocase subunit SecA"/>
    <property type="match status" value="1"/>
</dbReference>
<dbReference type="FunFam" id="3.40.50.300:FF:000113">
    <property type="entry name" value="Preprotein translocase subunit SecA"/>
    <property type="match status" value="1"/>
</dbReference>
<dbReference type="FunFam" id="3.90.1440.10:FF:000001">
    <property type="entry name" value="Preprotein translocase subunit SecA"/>
    <property type="match status" value="1"/>
</dbReference>
<dbReference type="FunFam" id="1.10.3060.10:FF:000003">
    <property type="entry name" value="Protein translocase subunit SecA"/>
    <property type="match status" value="1"/>
</dbReference>
<dbReference type="Gene3D" id="1.10.3060.10">
    <property type="entry name" value="Helical scaffold and wing domains of SecA"/>
    <property type="match status" value="1"/>
</dbReference>
<dbReference type="Gene3D" id="3.40.50.300">
    <property type="entry name" value="P-loop containing nucleotide triphosphate hydrolases"/>
    <property type="match status" value="2"/>
</dbReference>
<dbReference type="Gene3D" id="3.90.1440.10">
    <property type="entry name" value="SecA, preprotein cross-linking domain"/>
    <property type="match status" value="1"/>
</dbReference>
<dbReference type="HAMAP" id="MF_01382">
    <property type="entry name" value="SecA"/>
    <property type="match status" value="1"/>
</dbReference>
<dbReference type="InterPro" id="IPR014001">
    <property type="entry name" value="Helicase_ATP-bd"/>
</dbReference>
<dbReference type="InterPro" id="IPR001650">
    <property type="entry name" value="Helicase_C-like"/>
</dbReference>
<dbReference type="InterPro" id="IPR027417">
    <property type="entry name" value="P-loop_NTPase"/>
</dbReference>
<dbReference type="InterPro" id="IPR004027">
    <property type="entry name" value="SEC_C_motif"/>
</dbReference>
<dbReference type="InterPro" id="IPR000185">
    <property type="entry name" value="SecA"/>
</dbReference>
<dbReference type="InterPro" id="IPR020937">
    <property type="entry name" value="SecA_CS"/>
</dbReference>
<dbReference type="InterPro" id="IPR011115">
    <property type="entry name" value="SecA_DEAD"/>
</dbReference>
<dbReference type="InterPro" id="IPR014018">
    <property type="entry name" value="SecA_motor_DEAD"/>
</dbReference>
<dbReference type="InterPro" id="IPR011130">
    <property type="entry name" value="SecA_preprotein_X-link_dom"/>
</dbReference>
<dbReference type="InterPro" id="IPR044722">
    <property type="entry name" value="SecA_SF2_C"/>
</dbReference>
<dbReference type="InterPro" id="IPR011116">
    <property type="entry name" value="SecA_Wing/Scaffold"/>
</dbReference>
<dbReference type="InterPro" id="IPR036266">
    <property type="entry name" value="SecA_Wing/Scaffold_sf"/>
</dbReference>
<dbReference type="InterPro" id="IPR036670">
    <property type="entry name" value="SecA_X-link_sf"/>
</dbReference>
<dbReference type="NCBIfam" id="NF009538">
    <property type="entry name" value="PRK12904.1"/>
    <property type="match status" value="1"/>
</dbReference>
<dbReference type="NCBIfam" id="TIGR00963">
    <property type="entry name" value="secA"/>
    <property type="match status" value="1"/>
</dbReference>
<dbReference type="PANTHER" id="PTHR30612:SF0">
    <property type="entry name" value="CHLOROPLAST PROTEIN-TRANSPORTING ATPASE"/>
    <property type="match status" value="1"/>
</dbReference>
<dbReference type="PANTHER" id="PTHR30612">
    <property type="entry name" value="SECA INNER MEMBRANE COMPONENT OF SEC PROTEIN SECRETION SYSTEM"/>
    <property type="match status" value="1"/>
</dbReference>
<dbReference type="Pfam" id="PF21090">
    <property type="entry name" value="P-loop_SecA"/>
    <property type="match status" value="1"/>
</dbReference>
<dbReference type="Pfam" id="PF02810">
    <property type="entry name" value="SEC-C"/>
    <property type="match status" value="1"/>
</dbReference>
<dbReference type="Pfam" id="PF07517">
    <property type="entry name" value="SecA_DEAD"/>
    <property type="match status" value="1"/>
</dbReference>
<dbReference type="Pfam" id="PF01043">
    <property type="entry name" value="SecA_PP_bind"/>
    <property type="match status" value="1"/>
</dbReference>
<dbReference type="Pfam" id="PF07516">
    <property type="entry name" value="SecA_SW"/>
    <property type="match status" value="1"/>
</dbReference>
<dbReference type="PRINTS" id="PR00906">
    <property type="entry name" value="SECA"/>
</dbReference>
<dbReference type="SMART" id="SM00957">
    <property type="entry name" value="SecA_DEAD"/>
    <property type="match status" value="1"/>
</dbReference>
<dbReference type="SMART" id="SM00958">
    <property type="entry name" value="SecA_PP_bind"/>
    <property type="match status" value="1"/>
</dbReference>
<dbReference type="SUPFAM" id="SSF81886">
    <property type="entry name" value="Helical scaffold and wing domains of SecA"/>
    <property type="match status" value="1"/>
</dbReference>
<dbReference type="SUPFAM" id="SSF52540">
    <property type="entry name" value="P-loop containing nucleoside triphosphate hydrolases"/>
    <property type="match status" value="2"/>
</dbReference>
<dbReference type="SUPFAM" id="SSF81767">
    <property type="entry name" value="Pre-protein crosslinking domain of SecA"/>
    <property type="match status" value="1"/>
</dbReference>
<dbReference type="PROSITE" id="PS01312">
    <property type="entry name" value="SECA"/>
    <property type="match status" value="1"/>
</dbReference>
<dbReference type="PROSITE" id="PS51196">
    <property type="entry name" value="SECA_MOTOR_DEAD"/>
    <property type="match status" value="1"/>
</dbReference>
<protein>
    <recommendedName>
        <fullName evidence="1">Protein translocase subunit SecA</fullName>
        <ecNumber evidence="1">7.4.2.8</ecNumber>
    </recommendedName>
</protein>
<sequence>MTTGFLQKIFGSRNQRLVKQYQKTVTAINALEPQIEQLTDDQLRAKTGEFRQRVASGESLDKLLPEAFAVCREASKRVLKMRHFDVQLIGGMVLHYGKIGEMRTGEGKTLVATLPVYLNALSGRGVHVVTVNDYLAQRDAEWMARLYNFLGLSVGINLSQMDHGAKQEAYAADITYGTNNEFGFDYLRDNMVYETDARVQRALNFAVVDEVDSILIDEARTPLIISGQAEDHTDLYVRMNALPPLLERQIGEEKADGTGVERPGDYTLDEKGRQVFLTESGHEKAERLLAEWGLIGEGESLYAPQNITLMHHVYAALRAHTLFFKDQHYVVQNGEVVIVDEFTGRLMSGRRWSDGLHQAVEAKEHVKIQSENQTLASITFQNYFRMYAKLSGMTGTADTEAFEFNEIYGLETVVIPTNRPPKRIDKQDQIYKTAKERYDAVIRDIRDCYERGQPVLVGTTSIENSELLSHLLKQAGLPHEVLNAKQHAREAEIVAEAGRPKRVTIATNMAGRGTDIVLGGNAEKQASFIEKDETLSEEEKQRRIQKLHDEWQALHDQVKAAGGLHIIGTERHESRRIDNQLRGRAGRQGDPGSSRFYLSLEDPLLRIFAGDRVRAIMDRLKMPEGEAIEAGIVSRSIESAQRKVEARNFDVRKQLLEYDDVSNDQRKVIYQQRNELLEANDITETIGAMRQSVIGEIVHQFVPVGSIEEQWDVPELEEVLRNEWQLDLAIQEMINESNSISADEILEAVEAAADEAYEAKVELVGRESFSAFERSIMLQTLDRSWREHLAALDHLRQGIHLRGYAQKNPKQEYKREAFELFAAMLDAVKLEVTRVVMNVQIQSPEQLEQAAEQLEEQGGHLENVEFRHAEFAEAAAAAPVAAEAATAAMIGDAMSHGSSHTAAANLSADNVPKVGRNDPCPCGSGKKYKQCHGKIV</sequence>
<reference key="1">
    <citation type="journal article" date="2011" name="J. Bacteriol.">
        <title>Complete genome sequence of the plant growth-promoting endophyte Burkholderia phytofirmans strain PsJN.</title>
        <authorList>
            <person name="Weilharter A."/>
            <person name="Mitter B."/>
            <person name="Shin M.V."/>
            <person name="Chain P.S."/>
            <person name="Nowak J."/>
            <person name="Sessitsch A."/>
        </authorList>
    </citation>
    <scope>NUCLEOTIDE SEQUENCE [LARGE SCALE GENOMIC DNA]</scope>
    <source>
        <strain>DSM 17436 / LMG 22146 / PsJN</strain>
    </source>
</reference>